<proteinExistence type="inferred from homology"/>
<evidence type="ECO:0000255" key="1">
    <source>
        <dbReference type="HAMAP-Rule" id="MF_00464"/>
    </source>
</evidence>
<reference key="1">
    <citation type="journal article" date="2004" name="Nucleic Acids Res.">
        <title>The genome sequence of Bacillus cereus ATCC 10987 reveals metabolic adaptations and a large plasmid related to Bacillus anthracis pXO1.</title>
        <authorList>
            <person name="Rasko D.A."/>
            <person name="Ravel J."/>
            <person name="Oekstad O.A."/>
            <person name="Helgason E."/>
            <person name="Cer R.Z."/>
            <person name="Jiang L."/>
            <person name="Shores K.A."/>
            <person name="Fouts D.E."/>
            <person name="Tourasse N.J."/>
            <person name="Angiuoli S.V."/>
            <person name="Kolonay J.F."/>
            <person name="Nelson W.C."/>
            <person name="Kolstoe A.-B."/>
            <person name="Fraser C.M."/>
            <person name="Read T.D."/>
        </authorList>
    </citation>
    <scope>NUCLEOTIDE SEQUENCE [LARGE SCALE GENOMIC DNA]</scope>
    <source>
        <strain>ATCC 10987 / NRS 248</strain>
    </source>
</reference>
<organism>
    <name type="scientific">Bacillus cereus (strain ATCC 10987 / NRS 248)</name>
    <dbReference type="NCBI Taxonomy" id="222523"/>
    <lineage>
        <taxon>Bacteria</taxon>
        <taxon>Bacillati</taxon>
        <taxon>Bacillota</taxon>
        <taxon>Bacilli</taxon>
        <taxon>Bacillales</taxon>
        <taxon>Bacillaceae</taxon>
        <taxon>Bacillus</taxon>
        <taxon>Bacillus cereus group</taxon>
    </lineage>
</organism>
<gene>
    <name evidence="1" type="primary">speH</name>
    <name type="ordered locus">BCE_4712</name>
</gene>
<comment type="function">
    <text evidence="1">Catalyzes the decarboxylation of S-adenosylmethionine to S-adenosylmethioninamine (dcAdoMet), the propylamine donor required for the synthesis of the polyamines spermine and spermidine from the diamine putrescine.</text>
</comment>
<comment type="catalytic activity">
    <reaction evidence="1">
        <text>S-adenosyl-L-methionine + H(+) = S-adenosyl 3-(methylsulfanyl)propylamine + CO2</text>
        <dbReference type="Rhea" id="RHEA:15981"/>
        <dbReference type="ChEBI" id="CHEBI:15378"/>
        <dbReference type="ChEBI" id="CHEBI:16526"/>
        <dbReference type="ChEBI" id="CHEBI:57443"/>
        <dbReference type="ChEBI" id="CHEBI:59789"/>
        <dbReference type="EC" id="4.1.1.50"/>
    </reaction>
</comment>
<comment type="cofactor">
    <cofactor evidence="1">
        <name>pyruvate</name>
        <dbReference type="ChEBI" id="CHEBI:15361"/>
    </cofactor>
    <text evidence="1">Binds 1 pyruvoyl group covalently per subunit.</text>
</comment>
<comment type="pathway">
    <text evidence="1">Amine and polyamine biosynthesis; S-adenosylmethioninamine biosynthesis; S-adenosylmethioninamine from S-adenosyl-L-methionine: step 1/1.</text>
</comment>
<comment type="subunit">
    <text evidence="1">Heterotetramer of two alpha and two beta chains arranged as a dimer of alpha/beta heterodimers.</text>
</comment>
<comment type="PTM">
    <text evidence="1">Is synthesized initially as an inactive proenzyme. Formation of the active enzyme involves a self-maturation process in which the active site pyruvoyl group is generated from an internal serine residue via an autocatalytic post-translational modification. Two non-identical subunits are generated from the proenzyme in this reaction, and the pyruvate is formed at the N-terminus of the alpha chain, which is derived from the carboxyl end of the proenzyme. The post-translation cleavage follows an unusual pathway, termed non-hydrolytic serinolysis, in which the side chain hydroxyl group of the serine supplies its oxygen atom to form the C-terminus of the beta chain, while the remainder of the serine residue undergoes an oxidative deamination to produce ammonia and the pyruvoyl group blocking the N-terminus of the alpha chain.</text>
</comment>
<comment type="similarity">
    <text evidence="1">Belongs to the prokaryotic AdoMetDC family. Type 1 subfamily.</text>
</comment>
<feature type="chain" id="PRO_0000030085" description="S-adenosylmethionine decarboxylase beta chain" evidence="1">
    <location>
        <begin position="1"/>
        <end position="65"/>
    </location>
</feature>
<feature type="chain" id="PRO_0000030086" description="S-adenosylmethionine decarboxylase alpha chain" evidence="1">
    <location>
        <begin position="66"/>
        <end position="130"/>
    </location>
</feature>
<feature type="active site" description="Schiff-base intermediate with substrate; via pyruvic acid" evidence="1">
    <location>
        <position position="66"/>
    </location>
</feature>
<feature type="active site" description="Proton acceptor; for processing activity" evidence="1">
    <location>
        <position position="71"/>
    </location>
</feature>
<feature type="active site" description="Proton donor; for catalytic activity" evidence="1">
    <location>
        <position position="86"/>
    </location>
</feature>
<feature type="site" description="Cleavage (non-hydrolytic); by autolysis" evidence="1">
    <location>
        <begin position="65"/>
        <end position="66"/>
    </location>
</feature>
<feature type="modified residue" description="Pyruvic acid (Ser); by autocatalysis" evidence="1">
    <location>
        <position position="66"/>
    </location>
</feature>
<dbReference type="EC" id="4.1.1.50" evidence="1"/>
<dbReference type="EMBL" id="AE017194">
    <property type="protein sequence ID" value="AAS43613.1"/>
    <property type="molecule type" value="Genomic_DNA"/>
</dbReference>
<dbReference type="SMR" id="Q72ZF6"/>
<dbReference type="KEGG" id="bca:BCE_4712"/>
<dbReference type="HOGENOM" id="CLU_125470_2_3_9"/>
<dbReference type="UniPathway" id="UPA00331">
    <property type="reaction ID" value="UER00451"/>
</dbReference>
<dbReference type="Proteomes" id="UP000002527">
    <property type="component" value="Chromosome"/>
</dbReference>
<dbReference type="GO" id="GO:0005829">
    <property type="term" value="C:cytosol"/>
    <property type="evidence" value="ECO:0007669"/>
    <property type="project" value="TreeGrafter"/>
</dbReference>
<dbReference type="GO" id="GO:0004014">
    <property type="term" value="F:adenosylmethionine decarboxylase activity"/>
    <property type="evidence" value="ECO:0007669"/>
    <property type="project" value="UniProtKB-UniRule"/>
</dbReference>
<dbReference type="GO" id="GO:0008295">
    <property type="term" value="P:spermidine biosynthetic process"/>
    <property type="evidence" value="ECO:0007669"/>
    <property type="project" value="UniProtKB-UniRule"/>
</dbReference>
<dbReference type="FunFam" id="3.30.160.750:FF:000001">
    <property type="entry name" value="S-adenosylmethionine decarboxylase proenzyme"/>
    <property type="match status" value="1"/>
</dbReference>
<dbReference type="FunFam" id="3.30.360.110:FF:000001">
    <property type="entry name" value="S-adenosylmethionine decarboxylase proenzyme"/>
    <property type="match status" value="1"/>
</dbReference>
<dbReference type="Gene3D" id="3.30.160.750">
    <property type="match status" value="1"/>
</dbReference>
<dbReference type="Gene3D" id="3.30.360.110">
    <property type="entry name" value="S-adenosylmethionine decarboxylase domain"/>
    <property type="match status" value="1"/>
</dbReference>
<dbReference type="HAMAP" id="MF_00464">
    <property type="entry name" value="AdoMetDC_1"/>
    <property type="match status" value="1"/>
</dbReference>
<dbReference type="InterPro" id="IPR042286">
    <property type="entry name" value="AdoMetDC_C"/>
</dbReference>
<dbReference type="InterPro" id="IPR003826">
    <property type="entry name" value="AdoMetDC_fam_prok"/>
</dbReference>
<dbReference type="InterPro" id="IPR042284">
    <property type="entry name" value="AdoMetDC_N"/>
</dbReference>
<dbReference type="InterPro" id="IPR016067">
    <property type="entry name" value="S-AdoMet_deCO2ase_core"/>
</dbReference>
<dbReference type="InterPro" id="IPR017716">
    <property type="entry name" value="S-AdoMet_deCOase_pro-enz"/>
</dbReference>
<dbReference type="NCBIfam" id="TIGR03330">
    <property type="entry name" value="SAM_DCase_Bsu"/>
    <property type="match status" value="1"/>
</dbReference>
<dbReference type="PANTHER" id="PTHR33866">
    <property type="entry name" value="S-ADENOSYLMETHIONINE DECARBOXYLASE PROENZYME"/>
    <property type="match status" value="1"/>
</dbReference>
<dbReference type="PANTHER" id="PTHR33866:SF2">
    <property type="entry name" value="S-ADENOSYLMETHIONINE DECARBOXYLASE PROENZYME"/>
    <property type="match status" value="1"/>
</dbReference>
<dbReference type="Pfam" id="PF02675">
    <property type="entry name" value="AdoMet_dc"/>
    <property type="match status" value="1"/>
</dbReference>
<dbReference type="SUPFAM" id="SSF56276">
    <property type="entry name" value="S-adenosylmethionine decarboxylase"/>
    <property type="match status" value="1"/>
</dbReference>
<protein>
    <recommendedName>
        <fullName evidence="1">S-adenosylmethionine decarboxylase proenzyme</fullName>
        <shortName evidence="1">AdoMetDC</shortName>
        <shortName evidence="1">SAMDC</shortName>
        <ecNumber evidence="1">4.1.1.50</ecNumber>
    </recommendedName>
    <component>
        <recommendedName>
            <fullName evidence="1">S-adenosylmethionine decarboxylase beta chain</fullName>
        </recommendedName>
    </component>
    <component>
        <recommendedName>
            <fullName evidence="1">S-adenosylmethionine decarboxylase alpha chain</fullName>
        </recommendedName>
    </component>
</protein>
<name>SPEH_BACC1</name>
<keyword id="KW-0068">Autocatalytic cleavage</keyword>
<keyword id="KW-0210">Decarboxylase</keyword>
<keyword id="KW-0456">Lyase</keyword>
<keyword id="KW-0620">Polyamine biosynthesis</keyword>
<keyword id="KW-0670">Pyruvate</keyword>
<keyword id="KW-0949">S-adenosyl-L-methionine</keyword>
<keyword id="KW-0704">Schiff base</keyword>
<keyword id="KW-0745">Spermidine biosynthesis</keyword>
<keyword id="KW-0865">Zymogen</keyword>
<accession>Q72ZF6</accession>
<sequence>MDTMDTMGRHVIAELWDCDFDKLNDMPYIEQLFVDAALRAGAEVREVAFHKFAPQGVSGVVIISESHLTIHSFPEHGYASIDVYTCGDRIDPNVAAEYIAEGLNAKTRESIELPRGTGSFEIKQRETKAL</sequence>